<name>RL14_STAMF</name>
<organism>
    <name type="scientific">Staphylothermus marinus (strain ATCC 43588 / DSM 3639 / JCM 9404 / F1)</name>
    <dbReference type="NCBI Taxonomy" id="399550"/>
    <lineage>
        <taxon>Archaea</taxon>
        <taxon>Thermoproteota</taxon>
        <taxon>Thermoprotei</taxon>
        <taxon>Desulfurococcales</taxon>
        <taxon>Desulfurococcaceae</taxon>
        <taxon>Staphylothermus</taxon>
    </lineage>
</organism>
<feature type="chain" id="PRO_1000055709" description="Large ribosomal subunit protein uL14">
    <location>
        <begin position="1"/>
        <end position="140"/>
    </location>
</feature>
<gene>
    <name evidence="1" type="primary">rpl14</name>
    <name type="ordered locus">Smar_1029</name>
</gene>
<dbReference type="EMBL" id="CP000575">
    <property type="protein sequence ID" value="ABN70127.1"/>
    <property type="molecule type" value="Genomic_DNA"/>
</dbReference>
<dbReference type="RefSeq" id="WP_011839318.1">
    <property type="nucleotide sequence ID" value="NC_009033.1"/>
</dbReference>
<dbReference type="SMR" id="A3DNB7"/>
<dbReference type="STRING" id="399550.Smar_1029"/>
<dbReference type="GeneID" id="4906906"/>
<dbReference type="KEGG" id="smr:Smar_1029"/>
<dbReference type="eggNOG" id="arCOG04095">
    <property type="taxonomic scope" value="Archaea"/>
</dbReference>
<dbReference type="HOGENOM" id="CLU_095071_3_0_2"/>
<dbReference type="OrthoDB" id="23569at2157"/>
<dbReference type="Proteomes" id="UP000000254">
    <property type="component" value="Chromosome"/>
</dbReference>
<dbReference type="GO" id="GO:0022625">
    <property type="term" value="C:cytosolic large ribosomal subunit"/>
    <property type="evidence" value="ECO:0007669"/>
    <property type="project" value="TreeGrafter"/>
</dbReference>
<dbReference type="GO" id="GO:0070180">
    <property type="term" value="F:large ribosomal subunit rRNA binding"/>
    <property type="evidence" value="ECO:0007669"/>
    <property type="project" value="TreeGrafter"/>
</dbReference>
<dbReference type="GO" id="GO:0003735">
    <property type="term" value="F:structural constituent of ribosome"/>
    <property type="evidence" value="ECO:0007669"/>
    <property type="project" value="InterPro"/>
</dbReference>
<dbReference type="GO" id="GO:0006412">
    <property type="term" value="P:translation"/>
    <property type="evidence" value="ECO:0007669"/>
    <property type="project" value="UniProtKB-UniRule"/>
</dbReference>
<dbReference type="CDD" id="cd00337">
    <property type="entry name" value="Ribosomal_uL14"/>
    <property type="match status" value="1"/>
</dbReference>
<dbReference type="FunFam" id="2.40.150.20:FF:000007">
    <property type="entry name" value="50S ribosomal protein L14"/>
    <property type="match status" value="1"/>
</dbReference>
<dbReference type="Gene3D" id="2.40.150.20">
    <property type="entry name" value="Ribosomal protein L14"/>
    <property type="match status" value="1"/>
</dbReference>
<dbReference type="HAMAP" id="MF_01367">
    <property type="entry name" value="Ribosomal_uL14"/>
    <property type="match status" value="1"/>
</dbReference>
<dbReference type="InterPro" id="IPR000218">
    <property type="entry name" value="Ribosomal_uL14"/>
</dbReference>
<dbReference type="InterPro" id="IPR019971">
    <property type="entry name" value="Ribosomal_uL14_arc"/>
</dbReference>
<dbReference type="InterPro" id="IPR036853">
    <property type="entry name" value="Ribosomal_uL14_sf"/>
</dbReference>
<dbReference type="NCBIfam" id="NF006344">
    <property type="entry name" value="PRK08571.1"/>
    <property type="match status" value="1"/>
</dbReference>
<dbReference type="NCBIfam" id="TIGR03673">
    <property type="entry name" value="uL14_arch"/>
    <property type="match status" value="1"/>
</dbReference>
<dbReference type="PANTHER" id="PTHR11761">
    <property type="entry name" value="50S/60S RIBOSOMAL PROTEIN L14/L23"/>
    <property type="match status" value="1"/>
</dbReference>
<dbReference type="PANTHER" id="PTHR11761:SF8">
    <property type="entry name" value="LARGE RIBOSOMAL SUBUNIT PROTEIN UL14"/>
    <property type="match status" value="1"/>
</dbReference>
<dbReference type="Pfam" id="PF00238">
    <property type="entry name" value="Ribosomal_L14"/>
    <property type="match status" value="1"/>
</dbReference>
<dbReference type="SMART" id="SM01374">
    <property type="entry name" value="Ribosomal_L14"/>
    <property type="match status" value="1"/>
</dbReference>
<dbReference type="SUPFAM" id="SSF50193">
    <property type="entry name" value="Ribosomal protein L14"/>
    <property type="match status" value="1"/>
</dbReference>
<protein>
    <recommendedName>
        <fullName evidence="1">Large ribosomal subunit protein uL14</fullName>
    </recommendedName>
    <alternativeName>
        <fullName evidence="2">50S ribosomal protein L14</fullName>
    </alternativeName>
</protein>
<accession>A3DNB7</accession>
<proteinExistence type="inferred from homology"/>
<sequence>MPKKGKGKPAFSRRRIATGLQVGSYVRVADNSGAKLVKIIGVPGYKGRLRRIPPAGIGDLVVVTVKKGTPEMRKQVVKAVIVRQKRPFRRPDGTWVAFEDNAVAIVTPEGTPKGSEIRGPIAKEVAERWPQLANIATIVV</sequence>
<reference key="1">
    <citation type="journal article" date="2009" name="BMC Genomics">
        <title>The complete genome sequence of Staphylothermus marinus reveals differences in sulfur metabolism among heterotrophic Crenarchaeota.</title>
        <authorList>
            <person name="Anderson I.J."/>
            <person name="Dharmarajan L."/>
            <person name="Rodriguez J."/>
            <person name="Hooper S."/>
            <person name="Porat I."/>
            <person name="Ulrich L.E."/>
            <person name="Elkins J.G."/>
            <person name="Mavromatis K."/>
            <person name="Sun H."/>
            <person name="Land M."/>
            <person name="Lapidus A."/>
            <person name="Lucas S."/>
            <person name="Barry K."/>
            <person name="Huber H."/>
            <person name="Zhulin I.B."/>
            <person name="Whitman W.B."/>
            <person name="Mukhopadhyay B."/>
            <person name="Woese C."/>
            <person name="Bristow J."/>
            <person name="Kyrpides N."/>
        </authorList>
    </citation>
    <scope>NUCLEOTIDE SEQUENCE [LARGE SCALE GENOMIC DNA]</scope>
    <source>
        <strain>ATCC 43588 / DSM 3639 / JCM 9404 / F1</strain>
    </source>
</reference>
<reference key="2">
    <citation type="journal article" date="2009" name="Stand. Genomic Sci.">
        <title>Complete genome sequence of Staphylothermus marinus Stetter and Fiala 1986 type strain F1.</title>
        <authorList>
            <person name="Anderson I.J."/>
            <person name="Sun H."/>
            <person name="Lapidus A."/>
            <person name="Copeland A."/>
            <person name="Glavina Del Rio T."/>
            <person name="Tice H."/>
            <person name="Dalin E."/>
            <person name="Lucas S."/>
            <person name="Barry K."/>
            <person name="Land M."/>
            <person name="Richardson P."/>
            <person name="Huber H."/>
            <person name="Kyrpides N.C."/>
        </authorList>
    </citation>
    <scope>NUCLEOTIDE SEQUENCE [LARGE SCALE GENOMIC DNA]</scope>
    <source>
        <strain>ATCC 43588 / DSM 3639 / JCM 9404 / F1</strain>
    </source>
</reference>
<keyword id="KW-1185">Reference proteome</keyword>
<keyword id="KW-0687">Ribonucleoprotein</keyword>
<keyword id="KW-0689">Ribosomal protein</keyword>
<keyword id="KW-0694">RNA-binding</keyword>
<keyword id="KW-0699">rRNA-binding</keyword>
<comment type="function">
    <text evidence="1">Binds to 23S rRNA. Forms part of two intersubunit bridges in the 70S ribosome.</text>
</comment>
<comment type="subunit">
    <text evidence="1">Part of the 50S ribosomal subunit. Forms a cluster with proteins L3 and L24e, part of which may contact the 16S rRNA in 2 intersubunit bridges.</text>
</comment>
<comment type="similarity">
    <text evidence="1">Belongs to the universal ribosomal protein uL14 family.</text>
</comment>
<evidence type="ECO:0000255" key="1">
    <source>
        <dbReference type="HAMAP-Rule" id="MF_01367"/>
    </source>
</evidence>
<evidence type="ECO:0000305" key="2"/>